<evidence type="ECO:0000250" key="1"/>
<evidence type="ECO:0000250" key="2">
    <source>
        <dbReference type="UniProtKB" id="Q7Z094"/>
    </source>
</evidence>
<evidence type="ECO:0000269" key="3">
    <source>
    </source>
</evidence>
<evidence type="ECO:0000269" key="4">
    <source>
    </source>
</evidence>
<evidence type="ECO:0000305" key="5"/>
<protein>
    <recommendedName>
        <fullName>Iota-conotoxin-like r11b</fullName>
    </recommendedName>
    <alternativeName>
        <fullName>I-superfamily conotoxin R11.14</fullName>
    </alternativeName>
</protein>
<feature type="chain" id="PRO_0000086871" description="Iota-conotoxin-like r11b">
    <location>
        <begin position="1"/>
        <end position="46"/>
    </location>
</feature>
<feature type="modified residue" description="4-hydroxyproline" evidence="3">
    <location>
        <position position="2"/>
    </location>
</feature>
<feature type="modified residue" description="4-hydroxyproline" evidence="3">
    <location>
        <position position="11"/>
    </location>
</feature>
<feature type="modified residue" description="4-hydroxyproline" evidence="3">
    <location>
        <position position="29"/>
    </location>
</feature>
<feature type="modified residue" description="D-phenylalanine" evidence="4">
    <location>
        <position position="44"/>
    </location>
</feature>
<feature type="disulfide bond" evidence="2">
    <location>
        <begin position="5"/>
        <end position="19"/>
    </location>
</feature>
<feature type="disulfide bond" evidence="2">
    <location>
        <begin position="12"/>
        <end position="22"/>
    </location>
</feature>
<feature type="disulfide bond" evidence="2">
    <location>
        <begin position="18"/>
        <end position="27"/>
    </location>
</feature>
<feature type="disulfide bond" evidence="2">
    <location>
        <begin position="21"/>
        <end position="38"/>
    </location>
</feature>
<reference key="1">
    <citation type="journal article" date="2003" name="J. Neurochem.">
        <title>Novel excitatory Conus peptides define a new conotoxin superfamily.</title>
        <authorList>
            <person name="Jimenez E.C."/>
            <person name="Shetty R.P."/>
            <person name="Lirazan M."/>
            <person name="Rivier J."/>
            <person name="Walker C."/>
            <person name="Abogadie F.C."/>
            <person name="Yoshikami D."/>
            <person name="Cruz L.J."/>
            <person name="Olivera B.M."/>
        </authorList>
    </citation>
    <scope>NUCLEOTIDE SEQUENCE [MRNA]</scope>
    <scope>PROTEIN SEQUENCE</scope>
    <scope>HYDROXYLATION AT PRO-2; PRO-11 AND PRO-29</scope>
    <scope>MASS SPECTROMETRY</scope>
    <source>
        <tissue>Venom</tissue>
        <tissue>Venom duct</tissue>
    </source>
</reference>
<reference key="2">
    <citation type="journal article" date="2005" name="FEBS J.">
        <title>Characterization of D-amino-acid-containing excitatory conotoxins and redefinition of the I-conotoxin superfamily.</title>
        <authorList>
            <person name="Buczek O."/>
            <person name="Yoshikami D."/>
            <person name="Watkins M."/>
            <person name="Bulaj G."/>
            <person name="Jimenez E.C."/>
            <person name="Olivera B.M."/>
        </authorList>
    </citation>
    <scope>SYNTHESIS</scope>
    <scope>D-AMINO ACID AT PHE-44</scope>
    <source>
        <tissue>Venom</tissue>
    </source>
</reference>
<reference key="3">
    <citation type="journal article" date="2005" name="FEBS J.">
        <authorList>
            <person name="Buczek O."/>
            <person name="Yoshikami D."/>
            <person name="Watkins M."/>
            <person name="Bulaj G."/>
            <person name="Jimenez E.C."/>
            <person name="Olivera B.M."/>
        </authorList>
    </citation>
    <scope>ERRATUM OF PUBMED:16098199</scope>
</reference>
<proteinExistence type="evidence at protein level"/>
<accession>Q7Z092</accession>
<keyword id="KW-0208">D-amino acid</keyword>
<keyword id="KW-0903">Direct protein sequencing</keyword>
<keyword id="KW-1015">Disulfide bond</keyword>
<keyword id="KW-0379">Hydroxylation</keyword>
<keyword id="KW-0872">Ion channel impairing toxin</keyword>
<keyword id="KW-0528">Neurotoxin</keyword>
<keyword id="KW-0964">Secreted</keyword>
<keyword id="KW-0800">Toxin</keyword>
<keyword id="KW-0738">Voltage-gated sodium channel impairing toxin</keyword>
<sequence length="46" mass="4819">GPSFCKANGKPCSYHADCCNCCLSGICKPSTNVILPGCSTSSFFRI</sequence>
<name>I1BB_CONRA</name>
<dbReference type="EMBL" id="AY208961">
    <property type="protein sequence ID" value="AAP41543.1"/>
    <property type="molecule type" value="mRNA"/>
</dbReference>
<dbReference type="ConoServer" id="842">
    <property type="toxin name" value="RXIB"/>
</dbReference>
<dbReference type="GO" id="GO:0005576">
    <property type="term" value="C:extracellular region"/>
    <property type="evidence" value="ECO:0007669"/>
    <property type="project" value="UniProtKB-SubCell"/>
</dbReference>
<dbReference type="GO" id="GO:0017080">
    <property type="term" value="F:sodium channel regulator activity"/>
    <property type="evidence" value="ECO:0007669"/>
    <property type="project" value="UniProtKB-KW"/>
</dbReference>
<dbReference type="GO" id="GO:0090729">
    <property type="term" value="F:toxin activity"/>
    <property type="evidence" value="ECO:0007669"/>
    <property type="project" value="UniProtKB-KW"/>
</dbReference>
<dbReference type="Gene3D" id="4.10.40.80">
    <property type="match status" value="1"/>
</dbReference>
<dbReference type="InterPro" id="IPR013141">
    <property type="entry name" value="Conotoxin-I_CS"/>
</dbReference>
<dbReference type="InterPro" id="IPR012624">
    <property type="entry name" value="Toxin_19"/>
</dbReference>
<dbReference type="Pfam" id="PF08088">
    <property type="entry name" value="Toxin_19"/>
    <property type="match status" value="1"/>
</dbReference>
<dbReference type="PROSITE" id="PS60019">
    <property type="entry name" value="I_CONOTOXIN"/>
    <property type="match status" value="1"/>
</dbReference>
<comment type="function">
    <text evidence="1">Iota-conotoxins bind to voltage-gated sodium channels (Nav) and act as agonists by shifting the voltage-dependence of activation to more hyperpolarized levels (By similarity). Produces excitatory symptoms when injected intracranially into mice and is lethal at higher doses. Exposure to frog cutaneous pectoris induces spontaneous and repetitive action potentials. This effect is slowly reversible. Natural peptide (with D-Phe) is active on nerve, but not on muscle. Synthetic peptide (with L-Phe) is not active on both nerve and muscle.</text>
</comment>
<comment type="subcellular location">
    <subcellularLocation>
        <location>Secreted</location>
    </subcellularLocation>
</comment>
<comment type="tissue specificity">
    <text>Expressed by the venom duct.</text>
</comment>
<comment type="domain">
    <text>The cysteine framework is XI (C-C-CC-CC-C-C).</text>
</comment>
<comment type="PTM">
    <text>The natural D-Phe form of the peptide is more potent than the synthetic L-Phe form.</text>
</comment>
<comment type="mass spectrometry" mass="4857.6" method="MALDI" evidence="3"/>
<comment type="similarity">
    <text evidence="5">Belongs to the conotoxin I1 superfamily.</text>
</comment>
<organism>
    <name type="scientific">Conus radiatus</name>
    <name type="common">Rayed cone</name>
    <dbReference type="NCBI Taxonomy" id="61198"/>
    <lineage>
        <taxon>Eukaryota</taxon>
        <taxon>Metazoa</taxon>
        <taxon>Spiralia</taxon>
        <taxon>Lophotrochozoa</taxon>
        <taxon>Mollusca</taxon>
        <taxon>Gastropoda</taxon>
        <taxon>Caenogastropoda</taxon>
        <taxon>Neogastropoda</taxon>
        <taxon>Conoidea</taxon>
        <taxon>Conidae</taxon>
        <taxon>Conus</taxon>
        <taxon>Phasmoconus</taxon>
    </lineage>
</organism>